<feature type="chain" id="PRO_0000267724" description="3-hydroxydecanoyl-[acyl-carrier-protein] dehydratase">
    <location>
        <begin position="1"/>
        <end position="172"/>
    </location>
</feature>
<feature type="active site" evidence="1">
    <location>
        <position position="71"/>
    </location>
</feature>
<protein>
    <recommendedName>
        <fullName evidence="1">3-hydroxydecanoyl-[acyl-carrier-protein] dehydratase</fullName>
        <ecNumber evidence="1">4.2.1.59</ecNumber>
    </recommendedName>
    <alternativeName>
        <fullName evidence="1">3-hydroxyacyl-[acyl-carrier-protein] dehydratase FabA</fullName>
    </alternativeName>
    <alternativeName>
        <fullName evidence="1">Beta-hydroxydecanoyl thioester dehydrase</fullName>
    </alternativeName>
    <alternativeName>
        <fullName evidence="1">Trans-2-decenoyl-[acyl-carrier-protein] isomerase</fullName>
        <ecNumber evidence="1">5.3.3.14</ecNumber>
    </alternativeName>
</protein>
<dbReference type="EC" id="4.2.1.59" evidence="1"/>
<dbReference type="EC" id="5.3.3.14" evidence="1"/>
<dbReference type="EMBL" id="AM040264">
    <property type="protein sequence ID" value="CAJ12130.1"/>
    <property type="molecule type" value="Genomic_DNA"/>
</dbReference>
<dbReference type="RefSeq" id="WP_002968051.1">
    <property type="nucleotide sequence ID" value="NZ_KN046823.1"/>
</dbReference>
<dbReference type="SMR" id="Q2YQQ8"/>
<dbReference type="STRING" id="359391.BAB1_2174"/>
<dbReference type="GeneID" id="97534574"/>
<dbReference type="KEGG" id="bmf:BAB1_2174"/>
<dbReference type="PATRIC" id="fig|359391.11.peg.1411"/>
<dbReference type="HOGENOM" id="CLU_097925_0_0_5"/>
<dbReference type="PhylomeDB" id="Q2YQQ8"/>
<dbReference type="UniPathway" id="UPA00094"/>
<dbReference type="Proteomes" id="UP000002719">
    <property type="component" value="Chromosome I"/>
</dbReference>
<dbReference type="GO" id="GO:0005737">
    <property type="term" value="C:cytoplasm"/>
    <property type="evidence" value="ECO:0007669"/>
    <property type="project" value="UniProtKB-SubCell"/>
</dbReference>
<dbReference type="GO" id="GO:0019171">
    <property type="term" value="F:(3R)-hydroxyacyl-[acyl-carrier-protein] dehydratase activity"/>
    <property type="evidence" value="ECO:0007669"/>
    <property type="project" value="UniProtKB-UniRule"/>
</dbReference>
<dbReference type="GO" id="GO:0034017">
    <property type="term" value="F:trans-2-decenoyl-acyl-carrier-protein isomerase activity"/>
    <property type="evidence" value="ECO:0007669"/>
    <property type="project" value="UniProtKB-UniRule"/>
</dbReference>
<dbReference type="GO" id="GO:0006636">
    <property type="term" value="P:unsaturated fatty acid biosynthetic process"/>
    <property type="evidence" value="ECO:0007669"/>
    <property type="project" value="UniProtKB-UniRule"/>
</dbReference>
<dbReference type="CDD" id="cd01287">
    <property type="entry name" value="FabA"/>
    <property type="match status" value="1"/>
</dbReference>
<dbReference type="Gene3D" id="3.10.129.10">
    <property type="entry name" value="Hotdog Thioesterase"/>
    <property type="match status" value="1"/>
</dbReference>
<dbReference type="HAMAP" id="MF_00405">
    <property type="entry name" value="FabA"/>
    <property type="match status" value="1"/>
</dbReference>
<dbReference type="InterPro" id="IPR010083">
    <property type="entry name" value="FabA"/>
</dbReference>
<dbReference type="InterPro" id="IPR013114">
    <property type="entry name" value="FabA_FabZ"/>
</dbReference>
<dbReference type="InterPro" id="IPR029069">
    <property type="entry name" value="HotDog_dom_sf"/>
</dbReference>
<dbReference type="NCBIfam" id="TIGR01749">
    <property type="entry name" value="fabA"/>
    <property type="match status" value="1"/>
</dbReference>
<dbReference type="NCBIfam" id="NF003509">
    <property type="entry name" value="PRK05174.1"/>
    <property type="match status" value="1"/>
</dbReference>
<dbReference type="PANTHER" id="PTHR30272">
    <property type="entry name" value="3-HYDROXYACYL-[ACYL-CARRIER-PROTEIN] DEHYDRATASE"/>
    <property type="match status" value="1"/>
</dbReference>
<dbReference type="PANTHER" id="PTHR30272:SF8">
    <property type="entry name" value="3-HYDROXYDECANOYL-[ACYL-CARRIER-PROTEIN] DEHYDRATASE"/>
    <property type="match status" value="1"/>
</dbReference>
<dbReference type="Pfam" id="PF07977">
    <property type="entry name" value="FabA"/>
    <property type="match status" value="1"/>
</dbReference>
<dbReference type="SUPFAM" id="SSF54637">
    <property type="entry name" value="Thioesterase/thiol ester dehydrase-isomerase"/>
    <property type="match status" value="1"/>
</dbReference>
<gene>
    <name evidence="1" type="primary">fabA</name>
    <name type="ordered locus">BAB1_2174</name>
</gene>
<sequence length="172" mass="19086">MAEQKSSYGYEELLACGRGEMFGPGNAQLPLPPMLMIHRITEISETGGAFDKGYIRAEYDVRPDDWYFPCHFQGNPIMPGCLGLDGMWQLTGFFLGWLGEPGRGMALSTGEVKFKGMVRPHTKLLEYGIDFKRVMRGRLVLGTADGWLKADGELIYQATDLRVGLSKEGSAQ</sequence>
<accession>Q2YQQ8</accession>
<name>FABA_BRUA2</name>
<reference key="1">
    <citation type="journal article" date="2005" name="Infect. Immun.">
        <title>Whole-genome analyses of speciation events in pathogenic Brucellae.</title>
        <authorList>
            <person name="Chain P.S."/>
            <person name="Comerci D.J."/>
            <person name="Tolmasky M.E."/>
            <person name="Larimer F.W."/>
            <person name="Malfatti S.A."/>
            <person name="Vergez L.M."/>
            <person name="Aguero F."/>
            <person name="Land M.L."/>
            <person name="Ugalde R.A."/>
            <person name="Garcia E."/>
        </authorList>
    </citation>
    <scope>NUCLEOTIDE SEQUENCE [LARGE SCALE GENOMIC DNA]</scope>
    <source>
        <strain>2308</strain>
    </source>
</reference>
<keyword id="KW-0963">Cytoplasm</keyword>
<keyword id="KW-0275">Fatty acid biosynthesis</keyword>
<keyword id="KW-0276">Fatty acid metabolism</keyword>
<keyword id="KW-0413">Isomerase</keyword>
<keyword id="KW-0444">Lipid biosynthesis</keyword>
<keyword id="KW-0443">Lipid metabolism</keyword>
<keyword id="KW-0456">Lyase</keyword>
<keyword id="KW-1185">Reference proteome</keyword>
<proteinExistence type="inferred from homology"/>
<evidence type="ECO:0000255" key="1">
    <source>
        <dbReference type="HAMAP-Rule" id="MF_00405"/>
    </source>
</evidence>
<comment type="function">
    <text evidence="1">Necessary for the introduction of cis unsaturation into fatty acids. Catalyzes the dehydration of (3R)-3-hydroxydecanoyl-ACP to E-(2)-decenoyl-ACP and then its isomerization to Z-(3)-decenoyl-ACP. Can catalyze the dehydratase reaction for beta-hydroxyacyl-ACPs with saturated chain lengths up to 16:0, being most active on intermediate chain length.</text>
</comment>
<comment type="catalytic activity">
    <reaction evidence="1">
        <text>a (3R)-hydroxyacyl-[ACP] = a (2E)-enoyl-[ACP] + H2O</text>
        <dbReference type="Rhea" id="RHEA:13097"/>
        <dbReference type="Rhea" id="RHEA-COMP:9925"/>
        <dbReference type="Rhea" id="RHEA-COMP:9945"/>
        <dbReference type="ChEBI" id="CHEBI:15377"/>
        <dbReference type="ChEBI" id="CHEBI:78784"/>
        <dbReference type="ChEBI" id="CHEBI:78827"/>
        <dbReference type="EC" id="4.2.1.59"/>
    </reaction>
</comment>
<comment type="catalytic activity">
    <reaction evidence="1">
        <text>(3R)-hydroxydecanoyl-[ACP] = (2E)-decenoyl-[ACP] + H2O</text>
        <dbReference type="Rhea" id="RHEA:41860"/>
        <dbReference type="Rhea" id="RHEA-COMP:9638"/>
        <dbReference type="Rhea" id="RHEA-COMP:9639"/>
        <dbReference type="ChEBI" id="CHEBI:15377"/>
        <dbReference type="ChEBI" id="CHEBI:78466"/>
        <dbReference type="ChEBI" id="CHEBI:78467"/>
    </reaction>
</comment>
<comment type="catalytic activity">
    <reaction evidence="1">
        <text>(2E)-decenoyl-[ACP] = (3Z)-decenoyl-[ACP]</text>
        <dbReference type="Rhea" id="RHEA:23568"/>
        <dbReference type="Rhea" id="RHEA-COMP:9639"/>
        <dbReference type="Rhea" id="RHEA-COMP:9927"/>
        <dbReference type="ChEBI" id="CHEBI:78467"/>
        <dbReference type="ChEBI" id="CHEBI:78798"/>
        <dbReference type="EC" id="5.3.3.14"/>
    </reaction>
</comment>
<comment type="pathway">
    <text evidence="1">Lipid metabolism; fatty acid biosynthesis.</text>
</comment>
<comment type="subunit">
    <text evidence="1">Homodimer.</text>
</comment>
<comment type="subcellular location">
    <subcellularLocation>
        <location evidence="1">Cytoplasm</location>
    </subcellularLocation>
</comment>
<comment type="similarity">
    <text evidence="1">Belongs to the thioester dehydratase family. FabA subfamily.</text>
</comment>
<organism>
    <name type="scientific">Brucella abortus (strain 2308)</name>
    <dbReference type="NCBI Taxonomy" id="359391"/>
    <lineage>
        <taxon>Bacteria</taxon>
        <taxon>Pseudomonadati</taxon>
        <taxon>Pseudomonadota</taxon>
        <taxon>Alphaproteobacteria</taxon>
        <taxon>Hyphomicrobiales</taxon>
        <taxon>Brucellaceae</taxon>
        <taxon>Brucella/Ochrobactrum group</taxon>
        <taxon>Brucella</taxon>
    </lineage>
</organism>